<keyword id="KW-0342">GTP-binding</keyword>
<keyword id="KW-0547">Nucleotide-binding</keyword>
<keyword id="KW-1185">Reference proteome</keyword>
<keyword id="KW-0677">Repeat</keyword>
<keyword id="KW-0690">Ribosome biogenesis</keyword>
<name>DER_BREBN</name>
<protein>
    <recommendedName>
        <fullName evidence="1">GTPase Der</fullName>
    </recommendedName>
    <alternativeName>
        <fullName evidence="1">GTP-binding protein EngA</fullName>
    </alternativeName>
</protein>
<accession>C0ZCB6</accession>
<proteinExistence type="inferred from homology"/>
<reference key="1">
    <citation type="submission" date="2005-03" db="EMBL/GenBank/DDBJ databases">
        <title>Brevibacillus brevis strain 47, complete genome.</title>
        <authorList>
            <person name="Hosoyama A."/>
            <person name="Yamada R."/>
            <person name="Hongo Y."/>
            <person name="Terui Y."/>
            <person name="Ankai A."/>
            <person name="Masuyama W."/>
            <person name="Sekiguchi M."/>
            <person name="Takeda T."/>
            <person name="Asano K."/>
            <person name="Ohji S."/>
            <person name="Ichikawa N."/>
            <person name="Narita S."/>
            <person name="Aoki N."/>
            <person name="Miura H."/>
            <person name="Matsushita S."/>
            <person name="Sekigawa T."/>
            <person name="Yamagata H."/>
            <person name="Yoshikawa H."/>
            <person name="Udaka S."/>
            <person name="Tanikawa S."/>
            <person name="Fujita N."/>
        </authorList>
    </citation>
    <scope>NUCLEOTIDE SEQUENCE [LARGE SCALE GENOMIC DNA]</scope>
    <source>
        <strain>47 / JCM 6285 / NBRC 100599</strain>
    </source>
</reference>
<gene>
    <name evidence="1" type="primary">der</name>
    <name type="synonym">engA</name>
    <name type="ordered locus">BBR47_24480</name>
</gene>
<dbReference type="EMBL" id="AP008955">
    <property type="protein sequence ID" value="BAH43425.1"/>
    <property type="molecule type" value="Genomic_DNA"/>
</dbReference>
<dbReference type="RefSeq" id="WP_012686135.1">
    <property type="nucleotide sequence ID" value="NC_012491.1"/>
</dbReference>
<dbReference type="SMR" id="C0ZCB6"/>
<dbReference type="STRING" id="358681.BBR47_24480"/>
<dbReference type="KEGG" id="bbe:BBR47_24480"/>
<dbReference type="eggNOG" id="COG1160">
    <property type="taxonomic scope" value="Bacteria"/>
</dbReference>
<dbReference type="HOGENOM" id="CLU_016077_6_2_9"/>
<dbReference type="Proteomes" id="UP000001877">
    <property type="component" value="Chromosome"/>
</dbReference>
<dbReference type="GO" id="GO:0005525">
    <property type="term" value="F:GTP binding"/>
    <property type="evidence" value="ECO:0007669"/>
    <property type="project" value="UniProtKB-UniRule"/>
</dbReference>
<dbReference type="GO" id="GO:0043022">
    <property type="term" value="F:ribosome binding"/>
    <property type="evidence" value="ECO:0007669"/>
    <property type="project" value="TreeGrafter"/>
</dbReference>
<dbReference type="GO" id="GO:0042254">
    <property type="term" value="P:ribosome biogenesis"/>
    <property type="evidence" value="ECO:0007669"/>
    <property type="project" value="UniProtKB-KW"/>
</dbReference>
<dbReference type="CDD" id="cd01894">
    <property type="entry name" value="EngA1"/>
    <property type="match status" value="1"/>
</dbReference>
<dbReference type="CDD" id="cd01895">
    <property type="entry name" value="EngA2"/>
    <property type="match status" value="1"/>
</dbReference>
<dbReference type="FunFam" id="3.30.300.20:FF:000004">
    <property type="entry name" value="GTPase Der"/>
    <property type="match status" value="1"/>
</dbReference>
<dbReference type="FunFam" id="3.40.50.300:FF:000040">
    <property type="entry name" value="GTPase Der"/>
    <property type="match status" value="1"/>
</dbReference>
<dbReference type="FunFam" id="3.40.50.300:FF:000057">
    <property type="entry name" value="GTPase Der"/>
    <property type="match status" value="1"/>
</dbReference>
<dbReference type="Gene3D" id="3.30.300.20">
    <property type="match status" value="1"/>
</dbReference>
<dbReference type="Gene3D" id="3.40.50.300">
    <property type="entry name" value="P-loop containing nucleotide triphosphate hydrolases"/>
    <property type="match status" value="2"/>
</dbReference>
<dbReference type="HAMAP" id="MF_00195">
    <property type="entry name" value="GTPase_Der"/>
    <property type="match status" value="1"/>
</dbReference>
<dbReference type="InterPro" id="IPR031166">
    <property type="entry name" value="G_ENGA"/>
</dbReference>
<dbReference type="InterPro" id="IPR006073">
    <property type="entry name" value="GTP-bd"/>
</dbReference>
<dbReference type="InterPro" id="IPR016484">
    <property type="entry name" value="GTPase_Der"/>
</dbReference>
<dbReference type="InterPro" id="IPR032859">
    <property type="entry name" value="KH_dom-like"/>
</dbReference>
<dbReference type="InterPro" id="IPR015946">
    <property type="entry name" value="KH_dom-like_a/b"/>
</dbReference>
<dbReference type="InterPro" id="IPR027417">
    <property type="entry name" value="P-loop_NTPase"/>
</dbReference>
<dbReference type="InterPro" id="IPR005225">
    <property type="entry name" value="Small_GTP-bd"/>
</dbReference>
<dbReference type="NCBIfam" id="TIGR03594">
    <property type="entry name" value="GTPase_EngA"/>
    <property type="match status" value="1"/>
</dbReference>
<dbReference type="NCBIfam" id="TIGR00231">
    <property type="entry name" value="small_GTP"/>
    <property type="match status" value="2"/>
</dbReference>
<dbReference type="PANTHER" id="PTHR43834">
    <property type="entry name" value="GTPASE DER"/>
    <property type="match status" value="1"/>
</dbReference>
<dbReference type="PANTHER" id="PTHR43834:SF6">
    <property type="entry name" value="GTPASE DER"/>
    <property type="match status" value="1"/>
</dbReference>
<dbReference type="Pfam" id="PF14714">
    <property type="entry name" value="KH_dom-like"/>
    <property type="match status" value="1"/>
</dbReference>
<dbReference type="Pfam" id="PF01926">
    <property type="entry name" value="MMR_HSR1"/>
    <property type="match status" value="2"/>
</dbReference>
<dbReference type="PIRSF" id="PIRSF006485">
    <property type="entry name" value="GTP-binding_EngA"/>
    <property type="match status" value="1"/>
</dbReference>
<dbReference type="PRINTS" id="PR00326">
    <property type="entry name" value="GTP1OBG"/>
</dbReference>
<dbReference type="SUPFAM" id="SSF52540">
    <property type="entry name" value="P-loop containing nucleoside triphosphate hydrolases"/>
    <property type="match status" value="2"/>
</dbReference>
<dbReference type="PROSITE" id="PS51712">
    <property type="entry name" value="G_ENGA"/>
    <property type="match status" value="2"/>
</dbReference>
<comment type="function">
    <text evidence="1">GTPase that plays an essential role in the late steps of ribosome biogenesis.</text>
</comment>
<comment type="subunit">
    <text evidence="1">Associates with the 50S ribosomal subunit.</text>
</comment>
<comment type="similarity">
    <text evidence="1">Belongs to the TRAFAC class TrmE-Era-EngA-EngB-Septin-like GTPase superfamily. EngA (Der) GTPase family.</text>
</comment>
<sequence>MGLPVVAIVGRPNVGKSTIFNRLIGERVAIVEDMPGVTRDRLYGKGEWLTHTFHVIDTGGIEFGETDEILTQMRYQAELAIDEADVIIMIADSRTGVTDADVELSRMLNRTGKPVVLAVNKADNPEMRADIYDFYSLGLGEPFPVSGSHGLGLGDMLEEVCQHFPAEDDEEKRDDVIRVSIIGRPNVGKSSLTNAILGEERVIVSEVAGTTRDAIDTPFERDDQSYVLVDTAGMRKRGKVYETTEKYSVMRAMRSIEDSDVVLVVINGEEGIIEQDKKIAGYAHEAGRGVIIIVNKWDAIEKDDKTMQRFTELIREEFKYLDYAPILYVSAKSKQRVHTILPKVNEVAQAHSMRIPTAVLNDLVTDATIRTPPPSDRGKRLKINYATQATVKPPTFILFVNDPELMHFSYERYIENKIREAFVFEGTPVRIWTRKKT</sequence>
<evidence type="ECO:0000255" key="1">
    <source>
        <dbReference type="HAMAP-Rule" id="MF_00195"/>
    </source>
</evidence>
<feature type="chain" id="PRO_1000124343" description="GTPase Der">
    <location>
        <begin position="1"/>
        <end position="437"/>
    </location>
</feature>
<feature type="domain" description="EngA-type G 1">
    <location>
        <begin position="4"/>
        <end position="168"/>
    </location>
</feature>
<feature type="domain" description="EngA-type G 2">
    <location>
        <begin position="177"/>
        <end position="352"/>
    </location>
</feature>
<feature type="domain" description="KH-like" evidence="1">
    <location>
        <begin position="353"/>
        <end position="437"/>
    </location>
</feature>
<feature type="binding site" evidence="1">
    <location>
        <begin position="10"/>
        <end position="17"/>
    </location>
    <ligand>
        <name>GTP</name>
        <dbReference type="ChEBI" id="CHEBI:37565"/>
        <label>1</label>
    </ligand>
</feature>
<feature type="binding site" evidence="1">
    <location>
        <begin position="57"/>
        <end position="61"/>
    </location>
    <ligand>
        <name>GTP</name>
        <dbReference type="ChEBI" id="CHEBI:37565"/>
        <label>1</label>
    </ligand>
</feature>
<feature type="binding site" evidence="1">
    <location>
        <begin position="120"/>
        <end position="123"/>
    </location>
    <ligand>
        <name>GTP</name>
        <dbReference type="ChEBI" id="CHEBI:37565"/>
        <label>1</label>
    </ligand>
</feature>
<feature type="binding site" evidence="1">
    <location>
        <begin position="183"/>
        <end position="190"/>
    </location>
    <ligand>
        <name>GTP</name>
        <dbReference type="ChEBI" id="CHEBI:37565"/>
        <label>2</label>
    </ligand>
</feature>
<feature type="binding site" evidence="1">
    <location>
        <begin position="230"/>
        <end position="234"/>
    </location>
    <ligand>
        <name>GTP</name>
        <dbReference type="ChEBI" id="CHEBI:37565"/>
        <label>2</label>
    </ligand>
</feature>
<feature type="binding site" evidence="1">
    <location>
        <begin position="295"/>
        <end position="298"/>
    </location>
    <ligand>
        <name>GTP</name>
        <dbReference type="ChEBI" id="CHEBI:37565"/>
        <label>2</label>
    </ligand>
</feature>
<organism>
    <name type="scientific">Brevibacillus brevis (strain 47 / JCM 6285 / NBRC 100599)</name>
    <dbReference type="NCBI Taxonomy" id="358681"/>
    <lineage>
        <taxon>Bacteria</taxon>
        <taxon>Bacillati</taxon>
        <taxon>Bacillota</taxon>
        <taxon>Bacilli</taxon>
        <taxon>Bacillales</taxon>
        <taxon>Paenibacillaceae</taxon>
        <taxon>Brevibacillus</taxon>
    </lineage>
</organism>